<comment type="similarity">
    <text evidence="1">Belongs to the D-glutamate cyclase family.</text>
</comment>
<keyword id="KW-0456">Lyase</keyword>
<keyword id="KW-1185">Reference proteome</keyword>
<protein>
    <recommendedName>
        <fullName evidence="1">Putative hydro-lyase Xaut_1503</fullName>
        <ecNumber evidence="1">4.2.1.-</ecNumber>
    </recommendedName>
</protein>
<feature type="chain" id="PRO_0000379875" description="Putative hydro-lyase Xaut_1503">
    <location>
        <begin position="1"/>
        <end position="276"/>
    </location>
</feature>
<sequence length="276" mass="30110">MASTASLRVAPQADTYAAYQTPLAVRQACRSGALTGPTAGMAPGYVQGNLAVLPKELAEEFLRFCHFNPRPCPVIGMSEPGSFKVPVLGEDLDIRTDFPGYRVWQDGEVIADTADVTDYWRDDLVAFVIGCSLSFEEALMAEGLPLRHVDRNVRVPMFRTTVQCVPAGRFSGRMVMSMRPLVPAHAIRAIQITTRFPQVHGAPLHVGLPELIGVKDLMKPDYGDAVEVLDNELPVFWACGVTPQSVIAEAKPSFAITHAPGCMLVTDRRNTEFAIL</sequence>
<name>Y1503_XANP2</name>
<dbReference type="EC" id="4.2.1.-" evidence="1"/>
<dbReference type="EMBL" id="CP000781">
    <property type="protein sequence ID" value="ABS66751.1"/>
    <property type="molecule type" value="Genomic_DNA"/>
</dbReference>
<dbReference type="SMR" id="A7IFF8"/>
<dbReference type="STRING" id="78245.Xaut_1503"/>
<dbReference type="KEGG" id="xau:Xaut_1503"/>
<dbReference type="eggNOG" id="COG4336">
    <property type="taxonomic scope" value="Bacteria"/>
</dbReference>
<dbReference type="HOGENOM" id="CLU_059759_0_0_5"/>
<dbReference type="OrthoDB" id="149585at2"/>
<dbReference type="PhylomeDB" id="A7IFF8"/>
<dbReference type="Proteomes" id="UP000002417">
    <property type="component" value="Chromosome"/>
</dbReference>
<dbReference type="GO" id="GO:0016829">
    <property type="term" value="F:lyase activity"/>
    <property type="evidence" value="ECO:0007669"/>
    <property type="project" value="UniProtKB-KW"/>
</dbReference>
<dbReference type="FunFam" id="3.30.2040.10:FF:000001">
    <property type="entry name" value="D-glutamate cyclase, mitochondrial"/>
    <property type="match status" value="1"/>
</dbReference>
<dbReference type="Gene3D" id="3.40.1640.10">
    <property type="entry name" value="PSTPO5379-like"/>
    <property type="match status" value="1"/>
</dbReference>
<dbReference type="Gene3D" id="3.30.2040.10">
    <property type="entry name" value="PSTPO5379-like domain"/>
    <property type="match status" value="1"/>
</dbReference>
<dbReference type="HAMAP" id="MF_01830">
    <property type="entry name" value="Hydro_lyase"/>
    <property type="match status" value="1"/>
</dbReference>
<dbReference type="InterPro" id="IPR009906">
    <property type="entry name" value="D-Glu_cyclase"/>
</dbReference>
<dbReference type="InterPro" id="IPR038021">
    <property type="entry name" value="Putative_hydro-lyase"/>
</dbReference>
<dbReference type="InterPro" id="IPR016938">
    <property type="entry name" value="UPF0317"/>
</dbReference>
<dbReference type="NCBIfam" id="NF003969">
    <property type="entry name" value="PRK05463.1"/>
    <property type="match status" value="1"/>
</dbReference>
<dbReference type="PANTHER" id="PTHR32022">
    <property type="entry name" value="D-GLUTAMATE CYCLASE, MITOCHONDRIAL"/>
    <property type="match status" value="1"/>
</dbReference>
<dbReference type="PANTHER" id="PTHR32022:SF10">
    <property type="entry name" value="D-GLUTAMATE CYCLASE, MITOCHONDRIAL"/>
    <property type="match status" value="1"/>
</dbReference>
<dbReference type="Pfam" id="PF07286">
    <property type="entry name" value="D-Glu_cyclase"/>
    <property type="match status" value="1"/>
</dbReference>
<dbReference type="PIRSF" id="PIRSF029755">
    <property type="entry name" value="UCP029755"/>
    <property type="match status" value="1"/>
</dbReference>
<dbReference type="SUPFAM" id="SSF160920">
    <property type="entry name" value="PSTPO5379-like"/>
    <property type="match status" value="1"/>
</dbReference>
<reference key="1">
    <citation type="submission" date="2007-07" db="EMBL/GenBank/DDBJ databases">
        <title>Complete sequence of chromosome of Xanthobacter autotrophicus Py2.</title>
        <authorList>
            <consortium name="US DOE Joint Genome Institute"/>
            <person name="Copeland A."/>
            <person name="Lucas S."/>
            <person name="Lapidus A."/>
            <person name="Barry K."/>
            <person name="Glavina del Rio T."/>
            <person name="Hammon N."/>
            <person name="Israni S."/>
            <person name="Dalin E."/>
            <person name="Tice H."/>
            <person name="Pitluck S."/>
            <person name="Sims D."/>
            <person name="Brettin T."/>
            <person name="Bruce D."/>
            <person name="Detter J.C."/>
            <person name="Han C."/>
            <person name="Tapia R."/>
            <person name="Brainard J."/>
            <person name="Schmutz J."/>
            <person name="Larimer F."/>
            <person name="Land M."/>
            <person name="Hauser L."/>
            <person name="Kyrpides N."/>
            <person name="Kim E."/>
            <person name="Ensigns S.A."/>
            <person name="Richardson P."/>
        </authorList>
    </citation>
    <scope>NUCLEOTIDE SEQUENCE [LARGE SCALE GENOMIC DNA]</scope>
    <source>
        <strain>ATCC BAA-1158 / Py2</strain>
    </source>
</reference>
<gene>
    <name type="ordered locus">Xaut_1503</name>
</gene>
<organism>
    <name type="scientific">Xanthobacter autotrophicus (strain ATCC BAA-1158 / Py2)</name>
    <dbReference type="NCBI Taxonomy" id="78245"/>
    <lineage>
        <taxon>Bacteria</taxon>
        <taxon>Pseudomonadati</taxon>
        <taxon>Pseudomonadota</taxon>
        <taxon>Alphaproteobacteria</taxon>
        <taxon>Hyphomicrobiales</taxon>
        <taxon>Xanthobacteraceae</taxon>
        <taxon>Xanthobacter</taxon>
    </lineage>
</organism>
<evidence type="ECO:0000255" key="1">
    <source>
        <dbReference type="HAMAP-Rule" id="MF_01830"/>
    </source>
</evidence>
<proteinExistence type="inferred from homology"/>
<accession>A7IFF8</accession>